<organism>
    <name type="scientific">Dehalococcoides mccartyi (strain ATCC BAA-2100 / JCM 16839 / KCTC 5957 / BAV1)</name>
    <dbReference type="NCBI Taxonomy" id="216389"/>
    <lineage>
        <taxon>Bacteria</taxon>
        <taxon>Bacillati</taxon>
        <taxon>Chloroflexota</taxon>
        <taxon>Dehalococcoidia</taxon>
        <taxon>Dehalococcoidales</taxon>
        <taxon>Dehalococcoidaceae</taxon>
        <taxon>Dehalococcoides</taxon>
    </lineage>
</organism>
<reference key="1">
    <citation type="submission" date="2007-05" db="EMBL/GenBank/DDBJ databases">
        <title>Complete sequence of Dehalococcoides sp. BAV1.</title>
        <authorList>
            <consortium name="US DOE Joint Genome Institute"/>
            <person name="Copeland A."/>
            <person name="Lucas S."/>
            <person name="Lapidus A."/>
            <person name="Barry K."/>
            <person name="Detter J.C."/>
            <person name="Glavina del Rio T."/>
            <person name="Hammon N."/>
            <person name="Israni S."/>
            <person name="Pitluck S."/>
            <person name="Lowry S."/>
            <person name="Clum A."/>
            <person name="Schmutz J."/>
            <person name="Larimer F."/>
            <person name="Land M."/>
            <person name="Hauser L."/>
            <person name="Kyrpides N."/>
            <person name="Kim E."/>
            <person name="Ritalahti K.M."/>
            <person name="Loeffler F."/>
            <person name="Richardson P."/>
        </authorList>
    </citation>
    <scope>NUCLEOTIDE SEQUENCE [LARGE SCALE GENOMIC DNA]</scope>
    <source>
        <strain>ATCC BAA-2100 / JCM 16839 / KCTC 5957 / BAV1</strain>
    </source>
</reference>
<comment type="function">
    <text evidence="1">Produces ATP from ADP in the presence of a proton gradient across the membrane.</text>
</comment>
<comment type="subunit">
    <text evidence="1">F-type ATPases have 2 components, CF(1) - the catalytic core - and CF(0) - the membrane proton channel. CF(1) has five subunits: alpha(3), beta(3), gamma(1), delta(1), epsilon(1). CF(0) has three main subunits: a, b and c.</text>
</comment>
<comment type="subcellular location">
    <subcellularLocation>
        <location evidence="1">Cell membrane</location>
        <topology evidence="1">Peripheral membrane protein</topology>
    </subcellularLocation>
</comment>
<comment type="similarity">
    <text evidence="1">Belongs to the ATPase epsilon chain family.</text>
</comment>
<gene>
    <name evidence="1" type="primary">atpC</name>
    <name type="ordered locus">DehaBAV1_0539</name>
</gene>
<sequence length="140" mass="15275">MAKLKLDIVTAERSVFSEEVDVVVAPGIEGEMAILPHHAPLMTALQAGELKAKIGTEEYSLVVSGGFLEVRPDRVVVLADSAERAEEIDIARAIEAKKRAEASMADKYVPGMLAAETEASLRRAMVRLKVAEKRRKHPQV</sequence>
<proteinExistence type="inferred from homology"/>
<feature type="chain" id="PRO_1000081729" description="ATP synthase epsilon chain">
    <location>
        <begin position="1"/>
        <end position="140"/>
    </location>
</feature>
<protein>
    <recommendedName>
        <fullName evidence="1">ATP synthase epsilon chain</fullName>
    </recommendedName>
    <alternativeName>
        <fullName evidence="1">ATP synthase F1 sector epsilon subunit</fullName>
    </alternativeName>
    <alternativeName>
        <fullName evidence="1">F-ATPase epsilon subunit</fullName>
    </alternativeName>
</protein>
<dbReference type="EMBL" id="CP000688">
    <property type="protein sequence ID" value="ABQ17124.1"/>
    <property type="molecule type" value="Genomic_DNA"/>
</dbReference>
<dbReference type="SMR" id="A5FRQ6"/>
<dbReference type="KEGG" id="deb:DehaBAV1_0539"/>
<dbReference type="PATRIC" id="fig|216389.18.peg.584"/>
<dbReference type="HOGENOM" id="CLU_084338_1_3_0"/>
<dbReference type="GO" id="GO:0005886">
    <property type="term" value="C:plasma membrane"/>
    <property type="evidence" value="ECO:0007669"/>
    <property type="project" value="UniProtKB-SubCell"/>
</dbReference>
<dbReference type="GO" id="GO:0045259">
    <property type="term" value="C:proton-transporting ATP synthase complex"/>
    <property type="evidence" value="ECO:0007669"/>
    <property type="project" value="UniProtKB-KW"/>
</dbReference>
<dbReference type="GO" id="GO:0005524">
    <property type="term" value="F:ATP binding"/>
    <property type="evidence" value="ECO:0007669"/>
    <property type="project" value="UniProtKB-UniRule"/>
</dbReference>
<dbReference type="GO" id="GO:0046933">
    <property type="term" value="F:proton-transporting ATP synthase activity, rotational mechanism"/>
    <property type="evidence" value="ECO:0007669"/>
    <property type="project" value="UniProtKB-UniRule"/>
</dbReference>
<dbReference type="CDD" id="cd12152">
    <property type="entry name" value="F1-ATPase_delta"/>
    <property type="match status" value="1"/>
</dbReference>
<dbReference type="FunFam" id="2.60.15.10:FF:000001">
    <property type="entry name" value="ATP synthase epsilon chain"/>
    <property type="match status" value="1"/>
</dbReference>
<dbReference type="Gene3D" id="1.20.5.440">
    <property type="entry name" value="ATP synthase delta/epsilon subunit, C-terminal domain"/>
    <property type="match status" value="1"/>
</dbReference>
<dbReference type="Gene3D" id="2.60.15.10">
    <property type="entry name" value="F0F1 ATP synthase delta/epsilon subunit, N-terminal"/>
    <property type="match status" value="1"/>
</dbReference>
<dbReference type="HAMAP" id="MF_00530">
    <property type="entry name" value="ATP_synth_epsil_bac"/>
    <property type="match status" value="1"/>
</dbReference>
<dbReference type="InterPro" id="IPR036794">
    <property type="entry name" value="ATP_F1_dsu/esu_C_sf"/>
</dbReference>
<dbReference type="InterPro" id="IPR001469">
    <property type="entry name" value="ATP_synth_F1_dsu/esu"/>
</dbReference>
<dbReference type="InterPro" id="IPR020546">
    <property type="entry name" value="ATP_synth_F1_dsu/esu_N"/>
</dbReference>
<dbReference type="InterPro" id="IPR020547">
    <property type="entry name" value="ATP_synth_F1_esu_C"/>
</dbReference>
<dbReference type="InterPro" id="IPR036771">
    <property type="entry name" value="ATPsynth_dsu/esu_N"/>
</dbReference>
<dbReference type="NCBIfam" id="TIGR01216">
    <property type="entry name" value="ATP_synt_epsi"/>
    <property type="match status" value="1"/>
</dbReference>
<dbReference type="NCBIfam" id="NF009980">
    <property type="entry name" value="PRK13446.1"/>
    <property type="match status" value="1"/>
</dbReference>
<dbReference type="PANTHER" id="PTHR13822">
    <property type="entry name" value="ATP SYNTHASE DELTA/EPSILON CHAIN"/>
    <property type="match status" value="1"/>
</dbReference>
<dbReference type="PANTHER" id="PTHR13822:SF10">
    <property type="entry name" value="ATP SYNTHASE EPSILON CHAIN, CHLOROPLASTIC"/>
    <property type="match status" value="1"/>
</dbReference>
<dbReference type="Pfam" id="PF00401">
    <property type="entry name" value="ATP-synt_DE"/>
    <property type="match status" value="1"/>
</dbReference>
<dbReference type="Pfam" id="PF02823">
    <property type="entry name" value="ATP-synt_DE_N"/>
    <property type="match status" value="1"/>
</dbReference>
<dbReference type="SUPFAM" id="SSF46604">
    <property type="entry name" value="Epsilon subunit of F1F0-ATP synthase C-terminal domain"/>
    <property type="match status" value="1"/>
</dbReference>
<dbReference type="SUPFAM" id="SSF51344">
    <property type="entry name" value="Epsilon subunit of F1F0-ATP synthase N-terminal domain"/>
    <property type="match status" value="1"/>
</dbReference>
<evidence type="ECO:0000255" key="1">
    <source>
        <dbReference type="HAMAP-Rule" id="MF_00530"/>
    </source>
</evidence>
<name>ATPE_DEHMB</name>
<keyword id="KW-0066">ATP synthesis</keyword>
<keyword id="KW-1003">Cell membrane</keyword>
<keyword id="KW-0139">CF(1)</keyword>
<keyword id="KW-0375">Hydrogen ion transport</keyword>
<keyword id="KW-0406">Ion transport</keyword>
<keyword id="KW-0472">Membrane</keyword>
<keyword id="KW-0813">Transport</keyword>
<accession>A5FRQ6</accession>